<accession>A2SBC7</accession>
<gene>
    <name evidence="1" type="primary">mscL</name>
    <name type="ordered locus">BMA10229_A3310</name>
</gene>
<sequence>MSIIKEFKEFAVKGNVMDLAIGVIIGGAFSKIVDSVVKDLIMPVIGVLTGGLDFSNKFVLLGQIPASFKGNPESFKDLQAAGVATFGYGSFITVLINFIILAFIIFLMVKFINKLRKPEEAAPAATPEDVLLLREIRDSLKQR</sequence>
<keyword id="KW-0997">Cell inner membrane</keyword>
<keyword id="KW-1003">Cell membrane</keyword>
<keyword id="KW-0407">Ion channel</keyword>
<keyword id="KW-0406">Ion transport</keyword>
<keyword id="KW-0472">Membrane</keyword>
<keyword id="KW-0812">Transmembrane</keyword>
<keyword id="KW-1133">Transmembrane helix</keyword>
<keyword id="KW-0813">Transport</keyword>
<proteinExistence type="inferred from homology"/>
<feature type="chain" id="PRO_1000015361" description="Large-conductance mechanosensitive channel">
    <location>
        <begin position="1"/>
        <end position="143"/>
    </location>
</feature>
<feature type="transmembrane region" description="Helical" evidence="1">
    <location>
        <begin position="10"/>
        <end position="30"/>
    </location>
</feature>
<feature type="transmembrane region" description="Helical" evidence="1">
    <location>
        <begin position="89"/>
        <end position="109"/>
    </location>
</feature>
<protein>
    <recommendedName>
        <fullName evidence="1">Large-conductance mechanosensitive channel</fullName>
    </recommendedName>
</protein>
<organism>
    <name type="scientific">Burkholderia mallei (strain NCTC 10229)</name>
    <dbReference type="NCBI Taxonomy" id="412022"/>
    <lineage>
        <taxon>Bacteria</taxon>
        <taxon>Pseudomonadati</taxon>
        <taxon>Pseudomonadota</taxon>
        <taxon>Betaproteobacteria</taxon>
        <taxon>Burkholderiales</taxon>
        <taxon>Burkholderiaceae</taxon>
        <taxon>Burkholderia</taxon>
        <taxon>pseudomallei group</taxon>
    </lineage>
</organism>
<comment type="function">
    <text evidence="1">Channel that opens in response to stretch forces in the membrane lipid bilayer. May participate in the regulation of osmotic pressure changes within the cell.</text>
</comment>
<comment type="subunit">
    <text evidence="1">Homopentamer.</text>
</comment>
<comment type="subcellular location">
    <subcellularLocation>
        <location evidence="1">Cell inner membrane</location>
        <topology evidence="1">Multi-pass membrane protein</topology>
    </subcellularLocation>
</comment>
<comment type="similarity">
    <text evidence="1">Belongs to the MscL family.</text>
</comment>
<name>MSCL_BURM9</name>
<evidence type="ECO:0000255" key="1">
    <source>
        <dbReference type="HAMAP-Rule" id="MF_00115"/>
    </source>
</evidence>
<dbReference type="EMBL" id="CP000546">
    <property type="protein sequence ID" value="ABN03404.1"/>
    <property type="molecule type" value="Genomic_DNA"/>
</dbReference>
<dbReference type="RefSeq" id="WP_004192898.1">
    <property type="nucleotide sequence ID" value="NC_008836.1"/>
</dbReference>
<dbReference type="SMR" id="A2SBC7"/>
<dbReference type="GeneID" id="93060637"/>
<dbReference type="KEGG" id="bml:BMA10229_A3310"/>
<dbReference type="HOGENOM" id="CLU_095787_0_1_4"/>
<dbReference type="Proteomes" id="UP000002283">
    <property type="component" value="Chromosome I"/>
</dbReference>
<dbReference type="GO" id="GO:0005886">
    <property type="term" value="C:plasma membrane"/>
    <property type="evidence" value="ECO:0007669"/>
    <property type="project" value="UniProtKB-SubCell"/>
</dbReference>
<dbReference type="GO" id="GO:0008381">
    <property type="term" value="F:mechanosensitive monoatomic ion channel activity"/>
    <property type="evidence" value="ECO:0007669"/>
    <property type="project" value="UniProtKB-UniRule"/>
</dbReference>
<dbReference type="Gene3D" id="1.10.1200.120">
    <property type="entry name" value="Large-conductance mechanosensitive channel, MscL, domain 1"/>
    <property type="match status" value="1"/>
</dbReference>
<dbReference type="HAMAP" id="MF_00115">
    <property type="entry name" value="MscL"/>
    <property type="match status" value="1"/>
</dbReference>
<dbReference type="InterPro" id="IPR019823">
    <property type="entry name" value="Mechanosensitive_channel_CS"/>
</dbReference>
<dbReference type="InterPro" id="IPR001185">
    <property type="entry name" value="MS_channel"/>
</dbReference>
<dbReference type="InterPro" id="IPR037673">
    <property type="entry name" value="MSC/AndL"/>
</dbReference>
<dbReference type="InterPro" id="IPR036019">
    <property type="entry name" value="MscL_channel"/>
</dbReference>
<dbReference type="NCBIfam" id="TIGR00220">
    <property type="entry name" value="mscL"/>
    <property type="match status" value="1"/>
</dbReference>
<dbReference type="NCBIfam" id="NF001843">
    <property type="entry name" value="PRK00567.1-4"/>
    <property type="match status" value="1"/>
</dbReference>
<dbReference type="NCBIfam" id="NF010557">
    <property type="entry name" value="PRK13952.1"/>
    <property type="match status" value="1"/>
</dbReference>
<dbReference type="PANTHER" id="PTHR30266:SF2">
    <property type="entry name" value="LARGE-CONDUCTANCE MECHANOSENSITIVE CHANNEL"/>
    <property type="match status" value="1"/>
</dbReference>
<dbReference type="PANTHER" id="PTHR30266">
    <property type="entry name" value="MECHANOSENSITIVE CHANNEL MSCL"/>
    <property type="match status" value="1"/>
</dbReference>
<dbReference type="Pfam" id="PF01741">
    <property type="entry name" value="MscL"/>
    <property type="match status" value="1"/>
</dbReference>
<dbReference type="PRINTS" id="PR01264">
    <property type="entry name" value="MECHCHANNEL"/>
</dbReference>
<dbReference type="SUPFAM" id="SSF81330">
    <property type="entry name" value="Gated mechanosensitive channel"/>
    <property type="match status" value="1"/>
</dbReference>
<dbReference type="PROSITE" id="PS01327">
    <property type="entry name" value="MSCL"/>
    <property type="match status" value="1"/>
</dbReference>
<reference key="1">
    <citation type="journal article" date="2010" name="Genome Biol. Evol.">
        <title>Continuing evolution of Burkholderia mallei through genome reduction and large-scale rearrangements.</title>
        <authorList>
            <person name="Losada L."/>
            <person name="Ronning C.M."/>
            <person name="DeShazer D."/>
            <person name="Woods D."/>
            <person name="Fedorova N."/>
            <person name="Kim H.S."/>
            <person name="Shabalina S.A."/>
            <person name="Pearson T.R."/>
            <person name="Brinkac L."/>
            <person name="Tan P."/>
            <person name="Nandi T."/>
            <person name="Crabtree J."/>
            <person name="Badger J."/>
            <person name="Beckstrom-Sternberg S."/>
            <person name="Saqib M."/>
            <person name="Schutzer S.E."/>
            <person name="Keim P."/>
            <person name="Nierman W.C."/>
        </authorList>
    </citation>
    <scope>NUCLEOTIDE SEQUENCE [LARGE SCALE GENOMIC DNA]</scope>
    <source>
        <strain>NCTC 10229</strain>
    </source>
</reference>